<name>GBG3_HUMAN</name>
<evidence type="ECO:0000250" key="1"/>
<evidence type="ECO:0000250" key="2">
    <source>
        <dbReference type="UniProtKB" id="P63216"/>
    </source>
</evidence>
<evidence type="ECO:0000269" key="3">
    <source>
    </source>
</evidence>
<evidence type="ECO:0000269" key="4">
    <source>
    </source>
</evidence>
<evidence type="ECO:0000305" key="5"/>
<keyword id="KW-1003">Cell membrane</keyword>
<keyword id="KW-0449">Lipoprotein</keyword>
<keyword id="KW-0472">Membrane</keyword>
<keyword id="KW-0488">Methylation</keyword>
<keyword id="KW-0597">Phosphoprotein</keyword>
<keyword id="KW-0636">Prenylation</keyword>
<keyword id="KW-1267">Proteomics identification</keyword>
<keyword id="KW-1185">Reference proteome</keyword>
<keyword id="KW-0807">Transducer</keyword>
<comment type="function">
    <text>Guanine nucleotide-binding proteins (G proteins) are involved as a modulator or transducer in various transmembrane signaling systems. The beta and gamma chains are required for the GTPase activity, for replacement of GDP by GTP, and for G protein-effector interaction.</text>
</comment>
<comment type="subunit">
    <text evidence="3 4">G proteins are composed of 3 units, alpha, beta and gamma. Forms a complex with GNAO1 and GNB1 (PubMed:34685729). Interacts with SCN8A (PubMed:26900580).</text>
</comment>
<comment type="interaction">
    <interactant intactId="EBI-1046668">
        <id>P63215</id>
    </interactant>
    <interactant intactId="EBI-741158">
        <id>Q96HA8</id>
        <label>NTAQ1</label>
    </interactant>
    <organismsDiffer>false</organismsDiffer>
    <experiments>3</experiments>
</comment>
<comment type="interaction">
    <interactant intactId="EBI-1046668">
        <id>P63215</id>
    </interactant>
    <interactant intactId="EBI-10962400">
        <id>Q9UHA2</id>
        <label>SS18L2</label>
    </interactant>
    <organismsDiffer>false</organismsDiffer>
    <experiments>3</experiments>
</comment>
<comment type="interaction">
    <interactant intactId="EBI-1046668">
        <id>P63215</id>
    </interactant>
    <interactant intactId="EBI-10259086">
        <id>Q86UV6-2</id>
        <label>TRIM74</label>
    </interactant>
    <organismsDiffer>false</organismsDiffer>
    <experiments>3</experiments>
</comment>
<comment type="subcellular location">
    <subcellularLocation>
        <location evidence="5">Cell membrane</location>
        <topology evidence="5">Lipid-anchor</topology>
        <orientation evidence="5">Cytoplasmic side</orientation>
    </subcellularLocation>
</comment>
<comment type="similarity">
    <text evidence="5">Belongs to the G protein gamma family.</text>
</comment>
<protein>
    <recommendedName>
        <fullName>Guanine nucleotide-binding protein G(I)/G(S)/G(O) subunit gamma-3</fullName>
    </recommendedName>
</protein>
<sequence>MKGETPVNSTMSIGQARKMVEQLKIEASLCRIKVSKAAADLMTYCDAHACEDPLITPVPTSENPFREKKFFCALL</sequence>
<accession>P63215</accession>
<accession>B2R4S7</accession>
<accession>P29798</accession>
<accession>Q61014</accession>
<dbReference type="EMBL" id="AF092129">
    <property type="protein sequence ID" value="AAD40371.1"/>
    <property type="molecule type" value="mRNA"/>
</dbReference>
<dbReference type="EMBL" id="AF188177">
    <property type="protein sequence ID" value="AAF04567.1"/>
    <property type="molecule type" value="Genomic_DNA"/>
</dbReference>
<dbReference type="EMBL" id="AF087900">
    <property type="protein sequence ID" value="AAP97199.1"/>
    <property type="molecule type" value="mRNA"/>
</dbReference>
<dbReference type="EMBL" id="AF493871">
    <property type="protein sequence ID" value="AAM12585.1"/>
    <property type="molecule type" value="mRNA"/>
</dbReference>
<dbReference type="EMBL" id="AK311933">
    <property type="protein sequence ID" value="BAG34874.1"/>
    <property type="molecule type" value="mRNA"/>
</dbReference>
<dbReference type="EMBL" id="CH471076">
    <property type="protein sequence ID" value="EAW74082.1"/>
    <property type="molecule type" value="Genomic_DNA"/>
</dbReference>
<dbReference type="EMBL" id="BC015563">
    <property type="protein sequence ID" value="AAH15563.1"/>
    <property type="molecule type" value="mRNA"/>
</dbReference>
<dbReference type="CCDS" id="CCDS8032.1"/>
<dbReference type="RefSeq" id="NP_036334.1">
    <property type="nucleotide sequence ID" value="NM_012202.5"/>
</dbReference>
<dbReference type="RefSeq" id="XP_006718563.1">
    <property type="nucleotide sequence ID" value="XM_006718500.3"/>
</dbReference>
<dbReference type="RefSeq" id="XP_047282750.1">
    <property type="nucleotide sequence ID" value="XM_047426794.1"/>
</dbReference>
<dbReference type="RefSeq" id="XP_054224438.1">
    <property type="nucleotide sequence ID" value="XM_054368463.1"/>
</dbReference>
<dbReference type="RefSeq" id="XP_054224439.1">
    <property type="nucleotide sequence ID" value="XM_054368464.1"/>
</dbReference>
<dbReference type="SMR" id="P63215"/>
<dbReference type="BioGRID" id="109047">
    <property type="interactions" value="28"/>
</dbReference>
<dbReference type="CORUM" id="P63215"/>
<dbReference type="FunCoup" id="P63215">
    <property type="interactions" value="1687"/>
</dbReference>
<dbReference type="IntAct" id="P63215">
    <property type="interactions" value="18"/>
</dbReference>
<dbReference type="STRING" id="9606.ENSP00000294117"/>
<dbReference type="iPTMnet" id="P63215"/>
<dbReference type="PhosphoSitePlus" id="P63215"/>
<dbReference type="BioMuta" id="GNG3"/>
<dbReference type="DMDM" id="52783596"/>
<dbReference type="MassIVE" id="P63215"/>
<dbReference type="PaxDb" id="9606-ENSP00000294117"/>
<dbReference type="PeptideAtlas" id="P63215"/>
<dbReference type="ProteomicsDB" id="57507"/>
<dbReference type="Antibodypedia" id="28689">
    <property type="antibodies" value="92 antibodies from 21 providers"/>
</dbReference>
<dbReference type="DNASU" id="2785"/>
<dbReference type="Ensembl" id="ENST00000294117.6">
    <property type="protein sequence ID" value="ENSP00000294117.5"/>
    <property type="gene ID" value="ENSG00000162188.6"/>
</dbReference>
<dbReference type="GeneID" id="2785"/>
<dbReference type="KEGG" id="hsa:2785"/>
<dbReference type="MANE-Select" id="ENST00000294117.6">
    <property type="protein sequence ID" value="ENSP00000294117.5"/>
    <property type="RefSeq nucleotide sequence ID" value="NM_012202.5"/>
    <property type="RefSeq protein sequence ID" value="NP_036334.1"/>
</dbReference>
<dbReference type="UCSC" id="uc001nuv.5">
    <property type="organism name" value="human"/>
</dbReference>
<dbReference type="AGR" id="HGNC:4405"/>
<dbReference type="CTD" id="2785"/>
<dbReference type="DisGeNET" id="2785"/>
<dbReference type="GeneCards" id="GNG3"/>
<dbReference type="HGNC" id="HGNC:4405">
    <property type="gene designation" value="GNG3"/>
</dbReference>
<dbReference type="HPA" id="ENSG00000162188">
    <property type="expression patterns" value="Tissue enriched (brain)"/>
</dbReference>
<dbReference type="MalaCards" id="GNG3"/>
<dbReference type="MIM" id="608941">
    <property type="type" value="gene"/>
</dbReference>
<dbReference type="neXtProt" id="NX_P63215"/>
<dbReference type="OpenTargets" id="ENSG00000162188"/>
<dbReference type="PharmGKB" id="PA28785"/>
<dbReference type="VEuPathDB" id="HostDB:ENSG00000162188"/>
<dbReference type="eggNOG" id="KOG4119">
    <property type="taxonomic scope" value="Eukaryota"/>
</dbReference>
<dbReference type="GeneTree" id="ENSGT01100000263497"/>
<dbReference type="HOGENOM" id="CLU_168377_0_1_1"/>
<dbReference type="InParanoid" id="P63215"/>
<dbReference type="OMA" id="YCDAHTC"/>
<dbReference type="OrthoDB" id="6264244at2759"/>
<dbReference type="PAN-GO" id="P63215">
    <property type="GO annotations" value="3 GO annotations based on evolutionary models"/>
</dbReference>
<dbReference type="PhylomeDB" id="P63215"/>
<dbReference type="TreeFam" id="TF319909"/>
<dbReference type="PathwayCommons" id="P63215"/>
<dbReference type="Reactome" id="R-HSA-1296041">
    <property type="pathway name" value="Activation of G protein gated Potassium channels"/>
</dbReference>
<dbReference type="Reactome" id="R-HSA-163359">
    <property type="pathway name" value="Glucagon signaling in metabolic regulation"/>
</dbReference>
<dbReference type="Reactome" id="R-HSA-202040">
    <property type="pathway name" value="G-protein activation"/>
</dbReference>
<dbReference type="Reactome" id="R-HSA-381676">
    <property type="pathway name" value="Glucagon-like Peptide-1 (GLP1) regulates insulin secretion"/>
</dbReference>
<dbReference type="Reactome" id="R-HSA-392170">
    <property type="pathway name" value="ADP signalling through P2Y purinoceptor 12"/>
</dbReference>
<dbReference type="Reactome" id="R-HSA-392451">
    <property type="pathway name" value="G beta:gamma signalling through PI3Kgamma"/>
</dbReference>
<dbReference type="Reactome" id="R-HSA-392851">
    <property type="pathway name" value="Prostacyclin signalling through prostacyclin receptor"/>
</dbReference>
<dbReference type="Reactome" id="R-HSA-400042">
    <property type="pathway name" value="Adrenaline,noradrenaline inhibits insulin secretion"/>
</dbReference>
<dbReference type="Reactome" id="R-HSA-4086398">
    <property type="pathway name" value="Ca2+ pathway"/>
</dbReference>
<dbReference type="Reactome" id="R-HSA-416476">
    <property type="pathway name" value="G alpha (q) signalling events"/>
</dbReference>
<dbReference type="Reactome" id="R-HSA-416482">
    <property type="pathway name" value="G alpha (12/13) signalling events"/>
</dbReference>
<dbReference type="Reactome" id="R-HSA-418217">
    <property type="pathway name" value="G beta:gamma signalling through PLC beta"/>
</dbReference>
<dbReference type="Reactome" id="R-HSA-418555">
    <property type="pathway name" value="G alpha (s) signalling events"/>
</dbReference>
<dbReference type="Reactome" id="R-HSA-418592">
    <property type="pathway name" value="ADP signalling through P2Y purinoceptor 1"/>
</dbReference>
<dbReference type="Reactome" id="R-HSA-418594">
    <property type="pathway name" value="G alpha (i) signalling events"/>
</dbReference>
<dbReference type="Reactome" id="R-HSA-418597">
    <property type="pathway name" value="G alpha (z) signalling events"/>
</dbReference>
<dbReference type="Reactome" id="R-HSA-420092">
    <property type="pathway name" value="Glucagon-type ligand receptors"/>
</dbReference>
<dbReference type="Reactome" id="R-HSA-428930">
    <property type="pathway name" value="Thromboxane signalling through TP receptor"/>
</dbReference>
<dbReference type="Reactome" id="R-HSA-432040">
    <property type="pathway name" value="Vasopressin regulates renal water homeostasis via Aquaporins"/>
</dbReference>
<dbReference type="Reactome" id="R-HSA-456926">
    <property type="pathway name" value="Thrombin signalling through proteinase activated receptors (PARs)"/>
</dbReference>
<dbReference type="Reactome" id="R-HSA-500657">
    <property type="pathway name" value="Presynaptic function of Kainate receptors"/>
</dbReference>
<dbReference type="Reactome" id="R-HSA-6814122">
    <property type="pathway name" value="Cooperation of PDCL (PhLP1) and TRiC/CCT in G-protein beta folding"/>
</dbReference>
<dbReference type="Reactome" id="R-HSA-8964315">
    <property type="pathway name" value="G beta:gamma signalling through BTK"/>
</dbReference>
<dbReference type="Reactome" id="R-HSA-8964616">
    <property type="pathway name" value="G beta:gamma signalling through CDC42"/>
</dbReference>
<dbReference type="Reactome" id="R-HSA-9009391">
    <property type="pathway name" value="Extra-nuclear estrogen signaling"/>
</dbReference>
<dbReference type="Reactome" id="R-HSA-9634597">
    <property type="pathway name" value="GPER1 signaling"/>
</dbReference>
<dbReference type="Reactome" id="R-HSA-9660821">
    <property type="pathway name" value="ADORA2B mediated anti-inflammatory cytokines production"/>
</dbReference>
<dbReference type="Reactome" id="R-HSA-9856530">
    <property type="pathway name" value="High laminar flow shear stress activates signaling by PIEZO1 and PECAM1:CDH5:KDR in endothelial cells"/>
</dbReference>
<dbReference type="Reactome" id="R-HSA-997272">
    <property type="pathway name" value="Inhibition of voltage gated Ca2+ channels via Gbeta/gamma subunits"/>
</dbReference>
<dbReference type="SignaLink" id="P63215"/>
<dbReference type="SIGNOR" id="P63215"/>
<dbReference type="BioGRID-ORCS" id="2785">
    <property type="hits" value="27 hits in 1147 CRISPR screens"/>
</dbReference>
<dbReference type="CD-CODE" id="FB4E32DD">
    <property type="entry name" value="Presynaptic clusters and postsynaptic densities"/>
</dbReference>
<dbReference type="GeneWiki" id="GNG3"/>
<dbReference type="GenomeRNAi" id="2785"/>
<dbReference type="Pharos" id="P63215">
    <property type="development level" value="Tbio"/>
</dbReference>
<dbReference type="PRO" id="PR:P63215"/>
<dbReference type="Proteomes" id="UP000005640">
    <property type="component" value="Chromosome 11"/>
</dbReference>
<dbReference type="RNAct" id="P63215">
    <property type="molecule type" value="protein"/>
</dbReference>
<dbReference type="Bgee" id="ENSG00000162188">
    <property type="expression patterns" value="Expressed in right frontal lobe and 136 other cell types or tissues"/>
</dbReference>
<dbReference type="GO" id="GO:0044297">
    <property type="term" value="C:cell body"/>
    <property type="evidence" value="ECO:0007669"/>
    <property type="project" value="Ensembl"/>
</dbReference>
<dbReference type="GO" id="GO:0030425">
    <property type="term" value="C:dendrite"/>
    <property type="evidence" value="ECO:0007669"/>
    <property type="project" value="Ensembl"/>
</dbReference>
<dbReference type="GO" id="GO:0005834">
    <property type="term" value="C:heterotrimeric G-protein complex"/>
    <property type="evidence" value="ECO:0000318"/>
    <property type="project" value="GO_Central"/>
</dbReference>
<dbReference type="GO" id="GO:0005886">
    <property type="term" value="C:plasma membrane"/>
    <property type="evidence" value="ECO:0000304"/>
    <property type="project" value="Reactome"/>
</dbReference>
<dbReference type="GO" id="GO:0014069">
    <property type="term" value="C:postsynaptic density"/>
    <property type="evidence" value="ECO:0007669"/>
    <property type="project" value="Ensembl"/>
</dbReference>
<dbReference type="GO" id="GO:0031681">
    <property type="term" value="F:G-protein beta-subunit binding"/>
    <property type="evidence" value="ECO:0000318"/>
    <property type="project" value="GO_Central"/>
</dbReference>
<dbReference type="GO" id="GO:0003924">
    <property type="term" value="F:GTPase activity"/>
    <property type="evidence" value="ECO:0000304"/>
    <property type="project" value="ProtInc"/>
</dbReference>
<dbReference type="GO" id="GO:0007186">
    <property type="term" value="P:G protein-coupled receptor signaling pathway"/>
    <property type="evidence" value="ECO:0000318"/>
    <property type="project" value="GO_Central"/>
</dbReference>
<dbReference type="GO" id="GO:0007204">
    <property type="term" value="P:positive regulation of cytosolic calcium ion concentration"/>
    <property type="evidence" value="ECO:0007669"/>
    <property type="project" value="Ensembl"/>
</dbReference>
<dbReference type="CDD" id="cd00068">
    <property type="entry name" value="GGL"/>
    <property type="match status" value="1"/>
</dbReference>
<dbReference type="FunFam" id="4.10.260.10:FF:000001">
    <property type="entry name" value="Guanine nucleotide-binding protein subunit gamma"/>
    <property type="match status" value="1"/>
</dbReference>
<dbReference type="Gene3D" id="4.10.260.10">
    <property type="entry name" value="Transducin (heterotrimeric G protein), gamma chain"/>
    <property type="match status" value="1"/>
</dbReference>
<dbReference type="InterPro" id="IPR015898">
    <property type="entry name" value="G-protein_gamma-like_dom"/>
</dbReference>
<dbReference type="InterPro" id="IPR036284">
    <property type="entry name" value="GGL_sf"/>
</dbReference>
<dbReference type="InterPro" id="IPR001770">
    <property type="entry name" value="Gprotein-gamma"/>
</dbReference>
<dbReference type="PANTHER" id="PTHR13809">
    <property type="entry name" value="GUANINE NUCLEOTIDE-BINDING PROTEIN GAMMA SUBUNIT"/>
    <property type="match status" value="1"/>
</dbReference>
<dbReference type="Pfam" id="PF00631">
    <property type="entry name" value="G-gamma"/>
    <property type="match status" value="1"/>
</dbReference>
<dbReference type="PRINTS" id="PR00321">
    <property type="entry name" value="GPROTEING"/>
</dbReference>
<dbReference type="SMART" id="SM01224">
    <property type="entry name" value="G_gamma"/>
    <property type="match status" value="1"/>
</dbReference>
<dbReference type="SMART" id="SM00224">
    <property type="entry name" value="GGL"/>
    <property type="match status" value="1"/>
</dbReference>
<dbReference type="SUPFAM" id="SSF48670">
    <property type="entry name" value="Transducin (heterotrimeric G protein), gamma chain"/>
    <property type="match status" value="1"/>
</dbReference>
<dbReference type="PROSITE" id="PS50058">
    <property type="entry name" value="G_PROTEIN_GAMMA"/>
    <property type="match status" value="1"/>
</dbReference>
<reference key="1">
    <citation type="submission" date="1998-09" db="EMBL/GenBank/DDBJ databases">
        <authorList>
            <person name="Peng Y."/>
            <person name="Song H."/>
            <person name="Dai M."/>
            <person name="Huang Q."/>
            <person name="Mao Y."/>
            <person name="Zhang Q."/>
            <person name="Mao M."/>
            <person name="Fu G."/>
            <person name="Luo M."/>
            <person name="Chen J."/>
            <person name="Hu R."/>
        </authorList>
    </citation>
    <scope>NUCLEOTIDE SEQUENCE [MRNA]</scope>
    <source>
        <tissue>Pituitary</tissue>
    </source>
</reference>
<reference key="2">
    <citation type="journal article" date="2000" name="DNA Res.">
        <title>Genomic characterization of the human heterotrimeric G protein alpha, beta, and gamma subunit genes.</title>
        <authorList>
            <person name="Hurowitz E.H."/>
            <person name="Melnyk J.M."/>
            <person name="Chen Y.J."/>
            <person name="Kouros-Mehr H."/>
            <person name="Simon M.I."/>
            <person name="Shizuya H."/>
        </authorList>
    </citation>
    <scope>NUCLEOTIDE SEQUENCE [GENOMIC DNA]</scope>
</reference>
<reference key="3">
    <citation type="submission" date="2003-07" db="EMBL/GenBank/DDBJ databases">
        <title>Cloning and characterization of a novel human cDNA homology to bovine guanine nucleotide-binding protein gamma-3 subunit mRNA.</title>
        <authorList>
            <person name="Ding J.B."/>
            <person name="Yu L."/>
            <person name="Hua Y.M."/>
            <person name="Gong R.M."/>
            <person name="Xin Y.R."/>
            <person name="Zhao S.Y."/>
        </authorList>
    </citation>
    <scope>NUCLEOTIDE SEQUENCE [MRNA]</scope>
</reference>
<reference key="4">
    <citation type="submission" date="2002-03" db="EMBL/GenBank/DDBJ databases">
        <title>cDNA clones of human proteins involved in signal transduction sequenced by the Guthrie cDNA resource center (www.cdna.org).</title>
        <authorList>
            <person name="Puhl H.L. III"/>
            <person name="Ikeda S.R."/>
            <person name="Aronstam R.S."/>
        </authorList>
    </citation>
    <scope>NUCLEOTIDE SEQUENCE [LARGE SCALE MRNA]</scope>
</reference>
<reference key="5">
    <citation type="journal article" date="2004" name="Nat. Genet.">
        <title>Complete sequencing and characterization of 21,243 full-length human cDNAs.</title>
        <authorList>
            <person name="Ota T."/>
            <person name="Suzuki Y."/>
            <person name="Nishikawa T."/>
            <person name="Otsuki T."/>
            <person name="Sugiyama T."/>
            <person name="Irie R."/>
            <person name="Wakamatsu A."/>
            <person name="Hayashi K."/>
            <person name="Sato H."/>
            <person name="Nagai K."/>
            <person name="Kimura K."/>
            <person name="Makita H."/>
            <person name="Sekine M."/>
            <person name="Obayashi M."/>
            <person name="Nishi T."/>
            <person name="Shibahara T."/>
            <person name="Tanaka T."/>
            <person name="Ishii S."/>
            <person name="Yamamoto J."/>
            <person name="Saito K."/>
            <person name="Kawai Y."/>
            <person name="Isono Y."/>
            <person name="Nakamura Y."/>
            <person name="Nagahari K."/>
            <person name="Murakami K."/>
            <person name="Yasuda T."/>
            <person name="Iwayanagi T."/>
            <person name="Wagatsuma M."/>
            <person name="Shiratori A."/>
            <person name="Sudo H."/>
            <person name="Hosoiri T."/>
            <person name="Kaku Y."/>
            <person name="Kodaira H."/>
            <person name="Kondo H."/>
            <person name="Sugawara M."/>
            <person name="Takahashi M."/>
            <person name="Kanda K."/>
            <person name="Yokoi T."/>
            <person name="Furuya T."/>
            <person name="Kikkawa E."/>
            <person name="Omura Y."/>
            <person name="Abe K."/>
            <person name="Kamihara K."/>
            <person name="Katsuta N."/>
            <person name="Sato K."/>
            <person name="Tanikawa M."/>
            <person name="Yamazaki M."/>
            <person name="Ninomiya K."/>
            <person name="Ishibashi T."/>
            <person name="Yamashita H."/>
            <person name="Murakawa K."/>
            <person name="Fujimori K."/>
            <person name="Tanai H."/>
            <person name="Kimata M."/>
            <person name="Watanabe M."/>
            <person name="Hiraoka S."/>
            <person name="Chiba Y."/>
            <person name="Ishida S."/>
            <person name="Ono Y."/>
            <person name="Takiguchi S."/>
            <person name="Watanabe S."/>
            <person name="Yosida M."/>
            <person name="Hotuta T."/>
            <person name="Kusano J."/>
            <person name="Kanehori K."/>
            <person name="Takahashi-Fujii A."/>
            <person name="Hara H."/>
            <person name="Tanase T.-O."/>
            <person name="Nomura Y."/>
            <person name="Togiya S."/>
            <person name="Komai F."/>
            <person name="Hara R."/>
            <person name="Takeuchi K."/>
            <person name="Arita M."/>
            <person name="Imose N."/>
            <person name="Musashino K."/>
            <person name="Yuuki H."/>
            <person name="Oshima A."/>
            <person name="Sasaki N."/>
            <person name="Aotsuka S."/>
            <person name="Yoshikawa Y."/>
            <person name="Matsunawa H."/>
            <person name="Ichihara T."/>
            <person name="Shiohata N."/>
            <person name="Sano S."/>
            <person name="Moriya S."/>
            <person name="Momiyama H."/>
            <person name="Satoh N."/>
            <person name="Takami S."/>
            <person name="Terashima Y."/>
            <person name="Suzuki O."/>
            <person name="Nakagawa S."/>
            <person name="Senoh A."/>
            <person name="Mizoguchi H."/>
            <person name="Goto Y."/>
            <person name="Shimizu F."/>
            <person name="Wakebe H."/>
            <person name="Hishigaki H."/>
            <person name="Watanabe T."/>
            <person name="Sugiyama A."/>
            <person name="Takemoto M."/>
            <person name="Kawakami B."/>
            <person name="Yamazaki M."/>
            <person name="Watanabe K."/>
            <person name="Kumagai A."/>
            <person name="Itakura S."/>
            <person name="Fukuzumi Y."/>
            <person name="Fujimori Y."/>
            <person name="Komiyama M."/>
            <person name="Tashiro H."/>
            <person name="Tanigami A."/>
            <person name="Fujiwara T."/>
            <person name="Ono T."/>
            <person name="Yamada K."/>
            <person name="Fujii Y."/>
            <person name="Ozaki K."/>
            <person name="Hirao M."/>
            <person name="Ohmori Y."/>
            <person name="Kawabata A."/>
            <person name="Hikiji T."/>
            <person name="Kobatake N."/>
            <person name="Inagaki H."/>
            <person name="Ikema Y."/>
            <person name="Okamoto S."/>
            <person name="Okitani R."/>
            <person name="Kawakami T."/>
            <person name="Noguchi S."/>
            <person name="Itoh T."/>
            <person name="Shigeta K."/>
            <person name="Senba T."/>
            <person name="Matsumura K."/>
            <person name="Nakajima Y."/>
            <person name="Mizuno T."/>
            <person name="Morinaga M."/>
            <person name="Sasaki M."/>
            <person name="Togashi T."/>
            <person name="Oyama M."/>
            <person name="Hata H."/>
            <person name="Watanabe M."/>
            <person name="Komatsu T."/>
            <person name="Mizushima-Sugano J."/>
            <person name="Satoh T."/>
            <person name="Shirai Y."/>
            <person name="Takahashi Y."/>
            <person name="Nakagawa K."/>
            <person name="Okumura K."/>
            <person name="Nagase T."/>
            <person name="Nomura N."/>
            <person name="Kikuchi H."/>
            <person name="Masuho Y."/>
            <person name="Yamashita R."/>
            <person name="Nakai K."/>
            <person name="Yada T."/>
            <person name="Nakamura Y."/>
            <person name="Ohara O."/>
            <person name="Isogai T."/>
            <person name="Sugano S."/>
        </authorList>
    </citation>
    <scope>NUCLEOTIDE SEQUENCE [LARGE SCALE MRNA]</scope>
    <source>
        <tissue>Brain</tissue>
    </source>
</reference>
<reference key="6">
    <citation type="submission" date="2005-07" db="EMBL/GenBank/DDBJ databases">
        <authorList>
            <person name="Mural R.J."/>
            <person name="Istrail S."/>
            <person name="Sutton G.G."/>
            <person name="Florea L."/>
            <person name="Halpern A.L."/>
            <person name="Mobarry C.M."/>
            <person name="Lippert R."/>
            <person name="Walenz B."/>
            <person name="Shatkay H."/>
            <person name="Dew I."/>
            <person name="Miller J.R."/>
            <person name="Flanigan M.J."/>
            <person name="Edwards N.J."/>
            <person name="Bolanos R."/>
            <person name="Fasulo D."/>
            <person name="Halldorsson B.V."/>
            <person name="Hannenhalli S."/>
            <person name="Turner R."/>
            <person name="Yooseph S."/>
            <person name="Lu F."/>
            <person name="Nusskern D.R."/>
            <person name="Shue B.C."/>
            <person name="Zheng X.H."/>
            <person name="Zhong F."/>
            <person name="Delcher A.L."/>
            <person name="Huson D.H."/>
            <person name="Kravitz S.A."/>
            <person name="Mouchard L."/>
            <person name="Reinert K."/>
            <person name="Remington K.A."/>
            <person name="Clark A.G."/>
            <person name="Waterman M.S."/>
            <person name="Eichler E.E."/>
            <person name="Adams M.D."/>
            <person name="Hunkapiller M.W."/>
            <person name="Myers E.W."/>
            <person name="Venter J.C."/>
        </authorList>
    </citation>
    <scope>NUCLEOTIDE SEQUENCE [LARGE SCALE GENOMIC DNA]</scope>
</reference>
<reference key="7">
    <citation type="journal article" date="2004" name="Genome Res.">
        <title>The status, quality, and expansion of the NIH full-length cDNA project: the Mammalian Gene Collection (MGC).</title>
        <authorList>
            <consortium name="The MGC Project Team"/>
        </authorList>
    </citation>
    <scope>NUCLEOTIDE SEQUENCE [LARGE SCALE MRNA]</scope>
    <source>
        <tissue>Brain</tissue>
    </source>
</reference>
<reference key="8">
    <citation type="journal article" date="2016" name="Ann. Clin. Transl. Neurol.">
        <title>Pathogenic mechanism of recurrent mutations of SCN8A in epileptic encephalopathy.</title>
        <authorList>
            <person name="Wagnon J.L."/>
            <person name="Barker B.S."/>
            <person name="Hounshell J.A."/>
            <person name="Haaxma C.A."/>
            <person name="Shealy A."/>
            <person name="Moss T."/>
            <person name="Parikh S."/>
            <person name="Messer R.D."/>
            <person name="Patel M.K."/>
            <person name="Meisler M.H."/>
        </authorList>
    </citation>
    <scope>INTERACTION WITH SCN8A</scope>
</reference>
<reference key="9">
    <citation type="journal article" date="2021" name="Cells">
        <title>Pediatric Encephalopathy: Clinical, Biochemical and Cellular Insights into the Role of Gln52 of GNAO1 and GNAI1 for the Dominant Disease.</title>
        <authorList>
            <person name="Solis G.P."/>
            <person name="Kozhanova T.V."/>
            <person name="Koval A."/>
            <person name="Zhilina S.S."/>
            <person name="Mescheryakova T.I."/>
            <person name="Abramov A.A."/>
            <person name="Ishmuratov E.V."/>
            <person name="Bolshakova E.S."/>
            <person name="Osipova K.V."/>
            <person name="Ayvazyan S.O."/>
            <person name="Lebon S."/>
            <person name="Kanivets I.V."/>
            <person name="Pyankov D.V."/>
            <person name="Troccaz S."/>
            <person name="Silachev D.N."/>
            <person name="Zavadenko N.N."/>
            <person name="Prityko A.G."/>
            <person name="Katanaev V.L."/>
        </authorList>
    </citation>
    <scope>INTERACTION WITH GNAO1 AND GNB1</scope>
</reference>
<feature type="chain" id="PRO_0000012617" description="Guanine nucleotide-binding protein G(I)/G(S)/G(O) subunit gamma-3">
    <location>
        <begin position="1"/>
        <end position="72"/>
    </location>
</feature>
<feature type="propeptide" id="PRO_0000012618" description="Removed in mature form" evidence="1">
    <location>
        <begin position="73"/>
        <end position="75"/>
    </location>
</feature>
<feature type="modified residue" description="Phosphothreonine" evidence="2">
    <location>
        <position position="5"/>
    </location>
</feature>
<feature type="modified residue" description="Phosphoserine" evidence="2">
    <location>
        <position position="9"/>
    </location>
</feature>
<feature type="modified residue" description="Phosphothreonine" evidence="2">
    <location>
        <position position="10"/>
    </location>
</feature>
<feature type="modified residue" description="Phosphoserine" evidence="2">
    <location>
        <position position="12"/>
    </location>
</feature>
<feature type="modified residue" description="Cysteine methyl ester" evidence="1">
    <location>
        <position position="72"/>
    </location>
</feature>
<feature type="lipid moiety-binding region" description="S-geranylgeranyl cysteine" evidence="1">
    <location>
        <position position="72"/>
    </location>
</feature>
<organism>
    <name type="scientific">Homo sapiens</name>
    <name type="common">Human</name>
    <dbReference type="NCBI Taxonomy" id="9606"/>
    <lineage>
        <taxon>Eukaryota</taxon>
        <taxon>Metazoa</taxon>
        <taxon>Chordata</taxon>
        <taxon>Craniata</taxon>
        <taxon>Vertebrata</taxon>
        <taxon>Euteleostomi</taxon>
        <taxon>Mammalia</taxon>
        <taxon>Eutheria</taxon>
        <taxon>Euarchontoglires</taxon>
        <taxon>Primates</taxon>
        <taxon>Haplorrhini</taxon>
        <taxon>Catarrhini</taxon>
        <taxon>Hominidae</taxon>
        <taxon>Homo</taxon>
    </lineage>
</organism>
<proteinExistence type="evidence at protein level"/>
<gene>
    <name type="primary">GNG3</name>
    <name type="synonym">GNGT3</name>
</gene>